<gene>
    <name type="ordered locus">At5g38590</name>
    <name type="ORF">MBB18.14</name>
</gene>
<reference key="1">
    <citation type="journal article" date="1997" name="DNA Res.">
        <title>Structural analysis of Arabidopsis thaliana chromosome 5. I. Sequence features of the 1.6 Mb regions covered by twenty physically assigned P1 clones.</title>
        <authorList>
            <person name="Sato S."/>
            <person name="Kotani H."/>
            <person name="Nakamura Y."/>
            <person name="Kaneko T."/>
            <person name="Asamizu E."/>
            <person name="Fukami M."/>
            <person name="Miyajima N."/>
            <person name="Tabata S."/>
        </authorList>
    </citation>
    <scope>NUCLEOTIDE SEQUENCE [LARGE SCALE GENOMIC DNA]</scope>
    <source>
        <strain>cv. Columbia</strain>
    </source>
</reference>
<reference key="2">
    <citation type="journal article" date="2017" name="Plant J.">
        <title>Araport11: a complete reannotation of the Arabidopsis thaliana reference genome.</title>
        <authorList>
            <person name="Cheng C.Y."/>
            <person name="Krishnakumar V."/>
            <person name="Chan A.P."/>
            <person name="Thibaud-Nissen F."/>
            <person name="Schobel S."/>
            <person name="Town C.D."/>
        </authorList>
    </citation>
    <scope>GENOME REANNOTATION</scope>
    <source>
        <strain>cv. Columbia</strain>
    </source>
</reference>
<reference key="3">
    <citation type="journal article" date="2003" name="Science">
        <title>Empirical analysis of transcriptional activity in the Arabidopsis genome.</title>
        <authorList>
            <person name="Yamada K."/>
            <person name="Lim J."/>
            <person name="Dale J.M."/>
            <person name="Chen H."/>
            <person name="Shinn P."/>
            <person name="Palm C.J."/>
            <person name="Southwick A.M."/>
            <person name="Wu H.C."/>
            <person name="Kim C.J."/>
            <person name="Nguyen M."/>
            <person name="Pham P.K."/>
            <person name="Cheuk R.F."/>
            <person name="Karlin-Newmann G."/>
            <person name="Liu S.X."/>
            <person name="Lam B."/>
            <person name="Sakano H."/>
            <person name="Wu T."/>
            <person name="Yu G."/>
            <person name="Miranda M."/>
            <person name="Quach H.L."/>
            <person name="Tripp M."/>
            <person name="Chang C.H."/>
            <person name="Lee J.M."/>
            <person name="Toriumi M.J."/>
            <person name="Chan M.M."/>
            <person name="Tang C.C."/>
            <person name="Onodera C.S."/>
            <person name="Deng J.M."/>
            <person name="Akiyama K."/>
            <person name="Ansari Y."/>
            <person name="Arakawa T."/>
            <person name="Banh J."/>
            <person name="Banno F."/>
            <person name="Bowser L."/>
            <person name="Brooks S.Y."/>
            <person name="Carninci P."/>
            <person name="Chao Q."/>
            <person name="Choy N."/>
            <person name="Enju A."/>
            <person name="Goldsmith A.D."/>
            <person name="Gurjal M."/>
            <person name="Hansen N.F."/>
            <person name="Hayashizaki Y."/>
            <person name="Johnson-Hopson C."/>
            <person name="Hsuan V.W."/>
            <person name="Iida K."/>
            <person name="Karnes M."/>
            <person name="Khan S."/>
            <person name="Koesema E."/>
            <person name="Ishida J."/>
            <person name="Jiang P.X."/>
            <person name="Jones T."/>
            <person name="Kawai J."/>
            <person name="Kamiya A."/>
            <person name="Meyers C."/>
            <person name="Nakajima M."/>
            <person name="Narusaka M."/>
            <person name="Seki M."/>
            <person name="Sakurai T."/>
            <person name="Satou M."/>
            <person name="Tamse R."/>
            <person name="Vaysberg M."/>
            <person name="Wallender E.K."/>
            <person name="Wong C."/>
            <person name="Yamamura Y."/>
            <person name="Yuan S."/>
            <person name="Shinozaki K."/>
            <person name="Davis R.W."/>
            <person name="Theologis A."/>
            <person name="Ecker J.R."/>
        </authorList>
    </citation>
    <scope>NUCLEOTIDE SEQUENCE [LARGE SCALE MRNA] (ISOFORM 2)</scope>
    <source>
        <strain>cv. Columbia</strain>
    </source>
</reference>
<name>FBD17_ARATH</name>
<sequence>MDKINGLPDDLLVKILSYVPTDIAVSTSILSKRWEFLWMWLPNLDYTSRWCRKPGDVGLRDFIHKNLPLHRAPVIESLRFHSNSPDIKPEDIRRWIEIAVSRHVHDLDIDHFSENENIFLSSFFACKSLVTLKLRSVTLRDIPSMVCLPSLKTLLLDNVSFVEGKSLQELLSICPVLEDLSVYCDDYENTKELTIVVPSLLSLSLYIPDEWLLDGYWIDTPSLEYLKLEDWNSCDHLSLIKNMPKLREAYVDAKCFLPKSVIESITSVKHLTICSKDGYGDGFVFNQLEHLTLCVCRGDSPSLLGQLLKDSPNLRILEISVMEDHVDDVGISLDGWNQPSSVPECLLSSLQIFKWPQYLGRPEDRDIAVYILKNARHLKKTTILADRCERFVTQRRMIKELLQALPARIC</sequence>
<organism>
    <name type="scientific">Arabidopsis thaliana</name>
    <name type="common">Mouse-ear cress</name>
    <dbReference type="NCBI Taxonomy" id="3702"/>
    <lineage>
        <taxon>Eukaryota</taxon>
        <taxon>Viridiplantae</taxon>
        <taxon>Streptophyta</taxon>
        <taxon>Embryophyta</taxon>
        <taxon>Tracheophyta</taxon>
        <taxon>Spermatophyta</taxon>
        <taxon>Magnoliopsida</taxon>
        <taxon>eudicotyledons</taxon>
        <taxon>Gunneridae</taxon>
        <taxon>Pentapetalae</taxon>
        <taxon>rosids</taxon>
        <taxon>malvids</taxon>
        <taxon>Brassicales</taxon>
        <taxon>Brassicaceae</taxon>
        <taxon>Camelineae</taxon>
        <taxon>Arabidopsis</taxon>
    </lineage>
</organism>
<feature type="chain" id="PRO_0000283149" description="FBD-associated F-box protein At5g38590">
    <location>
        <begin position="1"/>
        <end position="410"/>
    </location>
</feature>
<feature type="domain" description="F-box">
    <location>
        <begin position="1"/>
        <end position="47"/>
    </location>
</feature>
<feature type="domain" description="FBD">
    <location>
        <begin position="335"/>
        <end position="385"/>
    </location>
</feature>
<feature type="splice variant" id="VSP_024314" description="In isoform 2." evidence="1">
    <original>DGYGDGFVFNQLEHLTLCVCRGDSPSLLGQLLKDSPNLRILEISVMEDHVDDVGISLDGWNQPSSVPECLLSSLQIFKWPQYLGRPEDRDIAVYILKNARHLKKTTILADRCERFVTQRRMIKELLQALPARIC</original>
    <variation>VPFLSTAGCQSKL</variation>
    <location>
        <begin position="277"/>
        <end position="410"/>
    </location>
</feature>
<comment type="alternative products">
    <event type="alternative splicing"/>
    <isoform>
        <id>Q9FFW2-1</id>
        <name>1</name>
        <sequence type="displayed"/>
    </isoform>
    <isoform>
        <id>Q9FFW2-2</id>
        <name>2</name>
        <sequence type="described" ref="VSP_024314"/>
    </isoform>
</comment>
<keyword id="KW-0025">Alternative splicing</keyword>
<keyword id="KW-1185">Reference proteome</keyword>
<dbReference type="EMBL" id="AB005231">
    <property type="protein sequence ID" value="BAB10149.1"/>
    <property type="molecule type" value="Genomic_DNA"/>
</dbReference>
<dbReference type="EMBL" id="CP002688">
    <property type="protein sequence ID" value="AED94338.1"/>
    <property type="molecule type" value="Genomic_DNA"/>
</dbReference>
<dbReference type="EMBL" id="CP002688">
    <property type="protein sequence ID" value="AED94339.1"/>
    <property type="molecule type" value="Genomic_DNA"/>
</dbReference>
<dbReference type="EMBL" id="BT010159">
    <property type="protein sequence ID" value="AAQ22628.1"/>
    <property type="molecule type" value="mRNA"/>
</dbReference>
<dbReference type="RefSeq" id="NP_198675.2">
    <molecule id="Q9FFW2-2"/>
    <property type="nucleotide sequence ID" value="NM_123220.3"/>
</dbReference>
<dbReference type="RefSeq" id="NP_974861.1">
    <molecule id="Q9FFW2-1"/>
    <property type="nucleotide sequence ID" value="NM_203132.2"/>
</dbReference>
<dbReference type="FunCoup" id="Q9FFW2">
    <property type="interactions" value="91"/>
</dbReference>
<dbReference type="STRING" id="3702.Q9FFW2"/>
<dbReference type="PaxDb" id="3702-AT5G38590.2"/>
<dbReference type="ProteomicsDB" id="230753">
    <molecule id="Q9FFW2-1"/>
</dbReference>
<dbReference type="EnsemblPlants" id="AT5G38590.1">
    <molecule id="Q9FFW2-2"/>
    <property type="protein sequence ID" value="AT5G38590.1"/>
    <property type="gene ID" value="AT5G38590"/>
</dbReference>
<dbReference type="EnsemblPlants" id="AT5G38590.2">
    <molecule id="Q9FFW2-1"/>
    <property type="protein sequence ID" value="AT5G38590.2"/>
    <property type="gene ID" value="AT5G38590"/>
</dbReference>
<dbReference type="GeneID" id="833848"/>
<dbReference type="Gramene" id="AT5G38590.1">
    <molecule id="Q9FFW2-2"/>
    <property type="protein sequence ID" value="AT5G38590.1"/>
    <property type="gene ID" value="AT5G38590"/>
</dbReference>
<dbReference type="Gramene" id="AT5G38590.2">
    <molecule id="Q9FFW2-1"/>
    <property type="protein sequence ID" value="AT5G38590.2"/>
    <property type="gene ID" value="AT5G38590"/>
</dbReference>
<dbReference type="KEGG" id="ath:AT5G38590"/>
<dbReference type="Araport" id="AT5G38590"/>
<dbReference type="TAIR" id="AT5G38590"/>
<dbReference type="eggNOG" id="ENOG502SX11">
    <property type="taxonomic scope" value="Eukaryota"/>
</dbReference>
<dbReference type="HOGENOM" id="CLU_010721_1_2_1"/>
<dbReference type="InParanoid" id="Q9FFW2"/>
<dbReference type="OMA" id="LFMADEW"/>
<dbReference type="PhylomeDB" id="Q9FFW2"/>
<dbReference type="PRO" id="PR:Q9FFW2"/>
<dbReference type="Proteomes" id="UP000006548">
    <property type="component" value="Chromosome 5"/>
</dbReference>
<dbReference type="ExpressionAtlas" id="Q9FFW2">
    <property type="expression patterns" value="baseline and differential"/>
</dbReference>
<dbReference type="GO" id="GO:0005777">
    <property type="term" value="C:peroxisome"/>
    <property type="evidence" value="ECO:0000314"/>
    <property type="project" value="TAIR"/>
</dbReference>
<dbReference type="CDD" id="cd22160">
    <property type="entry name" value="F-box_AtFBL13-like"/>
    <property type="match status" value="1"/>
</dbReference>
<dbReference type="FunFam" id="3.80.10.10:FF:002779">
    <property type="entry name" value="FBD-associated F-box protein At3g49020"/>
    <property type="match status" value="1"/>
</dbReference>
<dbReference type="Gene3D" id="3.80.10.10">
    <property type="entry name" value="Ribonuclease Inhibitor"/>
    <property type="match status" value="1"/>
</dbReference>
<dbReference type="InterPro" id="IPR036047">
    <property type="entry name" value="F-box-like_dom_sf"/>
</dbReference>
<dbReference type="InterPro" id="IPR053781">
    <property type="entry name" value="F-box_AtFBL13-like"/>
</dbReference>
<dbReference type="InterPro" id="IPR001810">
    <property type="entry name" value="F-box_dom"/>
</dbReference>
<dbReference type="InterPro" id="IPR006566">
    <property type="entry name" value="FBD"/>
</dbReference>
<dbReference type="InterPro" id="IPR050232">
    <property type="entry name" value="FBL13/AtMIF1-like"/>
</dbReference>
<dbReference type="InterPro" id="IPR032675">
    <property type="entry name" value="LRR_dom_sf"/>
</dbReference>
<dbReference type="InterPro" id="IPR055411">
    <property type="entry name" value="LRR_FXL15/At3g58940/PEG3-like"/>
</dbReference>
<dbReference type="PANTHER" id="PTHR31900">
    <property type="entry name" value="F-BOX/RNI SUPERFAMILY PROTEIN-RELATED"/>
    <property type="match status" value="1"/>
</dbReference>
<dbReference type="PANTHER" id="PTHR31900:SF28">
    <property type="entry name" value="FBD DOMAIN-CONTAINING PROTEIN"/>
    <property type="match status" value="1"/>
</dbReference>
<dbReference type="Pfam" id="PF00646">
    <property type="entry name" value="F-box"/>
    <property type="match status" value="1"/>
</dbReference>
<dbReference type="Pfam" id="PF08387">
    <property type="entry name" value="FBD"/>
    <property type="match status" value="1"/>
</dbReference>
<dbReference type="Pfam" id="PF24758">
    <property type="entry name" value="LRR_At5g56370"/>
    <property type="match status" value="1"/>
</dbReference>
<dbReference type="SMART" id="SM00579">
    <property type="entry name" value="FBD"/>
    <property type="match status" value="1"/>
</dbReference>
<dbReference type="SUPFAM" id="SSF81383">
    <property type="entry name" value="F-box domain"/>
    <property type="match status" value="1"/>
</dbReference>
<dbReference type="SUPFAM" id="SSF52047">
    <property type="entry name" value="RNI-like"/>
    <property type="match status" value="1"/>
</dbReference>
<accession>Q9FFW2</accession>
<accession>Q7XA75</accession>
<protein>
    <recommendedName>
        <fullName>FBD-associated F-box protein At5g38590</fullName>
    </recommendedName>
</protein>
<evidence type="ECO:0000303" key="1">
    <source>
    </source>
</evidence>
<proteinExistence type="evidence at transcript level"/>